<keyword id="KW-0975">Bacterial flagellum</keyword>
<keyword id="KW-0574">Periplasm</keyword>
<keyword id="KW-1185">Reference proteome</keyword>
<keyword id="KW-0732">Signal</keyword>
<name>FLGI_LEGPH</name>
<dbReference type="EMBL" id="AE017354">
    <property type="protein sequence ID" value="AAU27307.1"/>
    <property type="status" value="ALT_INIT"/>
    <property type="molecule type" value="Genomic_DNA"/>
</dbReference>
<dbReference type="RefSeq" id="WP_015444576.1">
    <property type="nucleotide sequence ID" value="NC_002942.5"/>
</dbReference>
<dbReference type="RefSeq" id="YP_095254.1">
    <property type="nucleotide sequence ID" value="NC_002942.5"/>
</dbReference>
<dbReference type="SMR" id="Q5ZW64"/>
<dbReference type="STRING" id="272624.lpg1223"/>
<dbReference type="PaxDb" id="272624-lpg1223"/>
<dbReference type="KEGG" id="lpn:lpg1223"/>
<dbReference type="PATRIC" id="fig|272624.6.peg.1287"/>
<dbReference type="eggNOG" id="COG1706">
    <property type="taxonomic scope" value="Bacteria"/>
</dbReference>
<dbReference type="HOGENOM" id="CLU_045235_1_0_6"/>
<dbReference type="OrthoDB" id="9786431at2"/>
<dbReference type="Proteomes" id="UP000000609">
    <property type="component" value="Chromosome"/>
</dbReference>
<dbReference type="GO" id="GO:0009428">
    <property type="term" value="C:bacterial-type flagellum basal body, distal rod, P ring"/>
    <property type="evidence" value="ECO:0007669"/>
    <property type="project" value="InterPro"/>
</dbReference>
<dbReference type="GO" id="GO:0030288">
    <property type="term" value="C:outer membrane-bounded periplasmic space"/>
    <property type="evidence" value="ECO:0007669"/>
    <property type="project" value="InterPro"/>
</dbReference>
<dbReference type="GO" id="GO:0005198">
    <property type="term" value="F:structural molecule activity"/>
    <property type="evidence" value="ECO:0007669"/>
    <property type="project" value="InterPro"/>
</dbReference>
<dbReference type="GO" id="GO:0071973">
    <property type="term" value="P:bacterial-type flagellum-dependent cell motility"/>
    <property type="evidence" value="ECO:0007669"/>
    <property type="project" value="InterPro"/>
</dbReference>
<dbReference type="HAMAP" id="MF_00416">
    <property type="entry name" value="FlgI"/>
    <property type="match status" value="1"/>
</dbReference>
<dbReference type="InterPro" id="IPR001782">
    <property type="entry name" value="Flag_FlgI"/>
</dbReference>
<dbReference type="NCBIfam" id="NF003676">
    <property type="entry name" value="PRK05303.1"/>
    <property type="match status" value="1"/>
</dbReference>
<dbReference type="PANTHER" id="PTHR30381">
    <property type="entry name" value="FLAGELLAR P-RING PERIPLASMIC PROTEIN FLGI"/>
    <property type="match status" value="1"/>
</dbReference>
<dbReference type="PANTHER" id="PTHR30381:SF0">
    <property type="entry name" value="FLAGELLAR P-RING PROTEIN"/>
    <property type="match status" value="1"/>
</dbReference>
<dbReference type="Pfam" id="PF02119">
    <property type="entry name" value="FlgI"/>
    <property type="match status" value="1"/>
</dbReference>
<dbReference type="PRINTS" id="PR01010">
    <property type="entry name" value="FLGPRINGFLGI"/>
</dbReference>
<evidence type="ECO:0000255" key="1">
    <source>
        <dbReference type="HAMAP-Rule" id="MF_00416"/>
    </source>
</evidence>
<evidence type="ECO:0000305" key="2"/>
<accession>Q5ZW64</accession>
<comment type="function">
    <text evidence="1">Assembles around the rod to form the L-ring and probably protects the motor/basal body from shearing forces during rotation.</text>
</comment>
<comment type="subunit">
    <text evidence="1">The basal body constitutes a major portion of the flagellar organelle and consists of four rings (L,P,S, and M) mounted on a central rod.</text>
</comment>
<comment type="subcellular location">
    <subcellularLocation>
        <location evidence="1">Periplasm</location>
    </subcellularLocation>
    <subcellularLocation>
        <location evidence="1">Bacterial flagellum basal body</location>
    </subcellularLocation>
</comment>
<comment type="similarity">
    <text evidence="1">Belongs to the FlgI family.</text>
</comment>
<comment type="sequence caution" evidence="2">
    <conflict type="erroneous initiation">
        <sequence resource="EMBL-CDS" id="AAU27307"/>
    </conflict>
</comment>
<reference key="1">
    <citation type="journal article" date="2004" name="Science">
        <title>The genomic sequence of the accidental pathogen Legionella pneumophila.</title>
        <authorList>
            <person name="Chien M."/>
            <person name="Morozova I."/>
            <person name="Shi S."/>
            <person name="Sheng H."/>
            <person name="Chen J."/>
            <person name="Gomez S.M."/>
            <person name="Asamani G."/>
            <person name="Hill K."/>
            <person name="Nuara J."/>
            <person name="Feder M."/>
            <person name="Rineer J."/>
            <person name="Greenberg J.J."/>
            <person name="Steshenko V."/>
            <person name="Park S.H."/>
            <person name="Zhao B."/>
            <person name="Teplitskaya E."/>
            <person name="Edwards J.R."/>
            <person name="Pampou S."/>
            <person name="Georghiou A."/>
            <person name="Chou I.-C."/>
            <person name="Iannuccilli W."/>
            <person name="Ulz M.E."/>
            <person name="Kim D.H."/>
            <person name="Geringer-Sameth A."/>
            <person name="Goldsberry C."/>
            <person name="Morozov P."/>
            <person name="Fischer S.G."/>
            <person name="Segal G."/>
            <person name="Qu X."/>
            <person name="Rzhetsky A."/>
            <person name="Zhang P."/>
            <person name="Cayanis E."/>
            <person name="De Jong P.J."/>
            <person name="Ju J."/>
            <person name="Kalachikov S."/>
            <person name="Shuman H.A."/>
            <person name="Russo J.J."/>
        </authorList>
    </citation>
    <scope>NUCLEOTIDE SEQUENCE [LARGE SCALE GENOMIC DNA]</scope>
    <source>
        <strain>Philadelphia 1 / ATCC 33152 / DSM 7513</strain>
    </source>
</reference>
<gene>
    <name evidence="1" type="primary">flgI</name>
    <name type="ordered locus">lpg1223</name>
</gene>
<organism>
    <name type="scientific">Legionella pneumophila subsp. pneumophila (strain Philadelphia 1 / ATCC 33152 / DSM 7513)</name>
    <dbReference type="NCBI Taxonomy" id="272624"/>
    <lineage>
        <taxon>Bacteria</taxon>
        <taxon>Pseudomonadati</taxon>
        <taxon>Pseudomonadota</taxon>
        <taxon>Gammaproteobacteria</taxon>
        <taxon>Legionellales</taxon>
        <taxon>Legionellaceae</taxon>
        <taxon>Legionella</taxon>
    </lineage>
</organism>
<proteinExistence type="inferred from homology"/>
<protein>
    <recommendedName>
        <fullName evidence="1">Flagellar P-ring protein</fullName>
    </recommendedName>
    <alternativeName>
        <fullName evidence="1">Basal body P-ring protein</fullName>
    </alternativeName>
</protein>
<sequence>MRRMLVIRWILAIHLIATQVFAERIKDIATLAGVRVNQLVGYGLVVGLSGTGDKTGTKFTEDSFANMLTQLGINIPPGVRLNSKNIAAVMVTANLSSFMKKGQTMDVNISSIGDSKSLLGGTLLLTPLKGADGRVYAMSQGNVVVSGISASGSDGSSVTVNVPSGGRIPNGATIEADIPNPFYYSNSLTYNLHNPDFTTAKRMSDAINELMGPGTAKAIDAGSVVVTAPKKLSQRVDYVSVLENIEFKPGEAMAKIIINARTGTVVISSNVIVKSAAVSHGNLVVSITETPVISQPNAFASGRTVSTQQSQVNIQQKNNRAFILPKGTTLKDIVRGINAVGATPADVISILEALQQAGALSATLIVI</sequence>
<feature type="signal peptide" evidence="1">
    <location>
        <begin position="1"/>
        <end position="22"/>
    </location>
</feature>
<feature type="chain" id="PRO_0000041798" description="Flagellar P-ring protein">
    <location>
        <begin position="23"/>
        <end position="367"/>
    </location>
</feature>